<name>HOME2_RAT</name>
<feature type="chain" id="PRO_0000191010" description="Homer protein homolog 2">
    <location>
        <begin position="1"/>
        <end position="354"/>
    </location>
</feature>
<feature type="domain" description="WH1" evidence="4">
    <location>
        <begin position="1"/>
        <end position="110"/>
    </location>
</feature>
<feature type="region of interest" description="Disordered" evidence="5">
    <location>
        <begin position="114"/>
        <end position="163"/>
    </location>
</feature>
<feature type="coiled-coil region" evidence="3">
    <location>
        <begin position="92"/>
        <end position="120"/>
    </location>
</feature>
<feature type="coiled-coil region" evidence="3">
    <location>
        <begin position="160"/>
        <end position="329"/>
    </location>
</feature>
<feature type="compositionally biased region" description="Polar residues" evidence="5">
    <location>
        <begin position="123"/>
        <end position="146"/>
    </location>
</feature>
<feature type="splice variant" id="VSP_009072" description="In isoform 2." evidence="7">
    <location>
        <begin position="130"/>
        <end position="140"/>
    </location>
</feature>
<dbReference type="EMBL" id="AB007689">
    <property type="protein sequence ID" value="BAA32478.1"/>
    <property type="molecule type" value="mRNA"/>
</dbReference>
<dbReference type="EMBL" id="AB007690">
    <property type="protein sequence ID" value="BAA32479.1"/>
    <property type="molecule type" value="mRNA"/>
</dbReference>
<dbReference type="RefSeq" id="NP_445761.1">
    <molecule id="O88801-1"/>
    <property type="nucleotide sequence ID" value="NM_053309.2"/>
</dbReference>
<dbReference type="RefSeq" id="XP_038965466.1">
    <molecule id="O88801-2"/>
    <property type="nucleotide sequence ID" value="XM_039109538.2"/>
</dbReference>
<dbReference type="SMR" id="O88801"/>
<dbReference type="BioGRID" id="248181">
    <property type="interactions" value="3"/>
</dbReference>
<dbReference type="FunCoup" id="O88801">
    <property type="interactions" value="505"/>
</dbReference>
<dbReference type="IntAct" id="O88801">
    <property type="interactions" value="2"/>
</dbReference>
<dbReference type="STRING" id="10116.ENSRNOP00000070858"/>
<dbReference type="iPTMnet" id="O88801"/>
<dbReference type="PhosphoSitePlus" id="O88801"/>
<dbReference type="jPOST" id="O88801"/>
<dbReference type="PaxDb" id="10116-ENSRNOP00000026158"/>
<dbReference type="Ensembl" id="ENSRNOT00000087785.2">
    <molecule id="O88801-1"/>
    <property type="protein sequence ID" value="ENSRNOP00000070858.1"/>
    <property type="gene ID" value="ENSRNOG00000061450.2"/>
</dbReference>
<dbReference type="GeneID" id="29547"/>
<dbReference type="KEGG" id="rno:29547"/>
<dbReference type="UCSC" id="RGD:620705">
    <molecule id="O88801-1"/>
    <property type="organism name" value="rat"/>
</dbReference>
<dbReference type="AGR" id="RGD:620705"/>
<dbReference type="CTD" id="9455"/>
<dbReference type="RGD" id="620705">
    <property type="gene designation" value="Homer2"/>
</dbReference>
<dbReference type="eggNOG" id="ENOG502QR3K">
    <property type="taxonomic scope" value="Eukaryota"/>
</dbReference>
<dbReference type="GeneTree" id="ENSGT00940000157324"/>
<dbReference type="HOGENOM" id="CLU_033940_0_0_1"/>
<dbReference type="InParanoid" id="O88801"/>
<dbReference type="OrthoDB" id="49093at9989"/>
<dbReference type="PhylomeDB" id="O88801"/>
<dbReference type="TreeFam" id="TF325627"/>
<dbReference type="Reactome" id="R-RNO-6794361">
    <property type="pathway name" value="Neurexins and neuroligins"/>
</dbReference>
<dbReference type="PRO" id="PR:O88801"/>
<dbReference type="Proteomes" id="UP000002494">
    <property type="component" value="Chromosome 1"/>
</dbReference>
<dbReference type="Bgee" id="ENSRNOG00000061450">
    <property type="expression patterns" value="Expressed in pancreas and 18 other cell types or tissues"/>
</dbReference>
<dbReference type="GO" id="GO:0045177">
    <property type="term" value="C:apical part of cell"/>
    <property type="evidence" value="ECO:0000266"/>
    <property type="project" value="RGD"/>
</dbReference>
<dbReference type="GO" id="GO:0005737">
    <property type="term" value="C:cytoplasm"/>
    <property type="evidence" value="ECO:0000266"/>
    <property type="project" value="RGD"/>
</dbReference>
<dbReference type="GO" id="GO:0030425">
    <property type="term" value="C:dendrite"/>
    <property type="evidence" value="ECO:0000314"/>
    <property type="project" value="RGD"/>
</dbReference>
<dbReference type="GO" id="GO:0098978">
    <property type="term" value="C:glutamatergic synapse"/>
    <property type="evidence" value="ECO:0000266"/>
    <property type="project" value="RGD"/>
</dbReference>
<dbReference type="GO" id="GO:0043229">
    <property type="term" value="C:intracellular organelle"/>
    <property type="evidence" value="ECO:0000314"/>
    <property type="project" value="UniProtKB"/>
</dbReference>
<dbReference type="GO" id="GO:0043025">
    <property type="term" value="C:neuronal cell body"/>
    <property type="evidence" value="ECO:0000314"/>
    <property type="project" value="RGD"/>
</dbReference>
<dbReference type="GO" id="GO:0005886">
    <property type="term" value="C:plasma membrane"/>
    <property type="evidence" value="ECO:0000314"/>
    <property type="project" value="UniProtKB"/>
</dbReference>
<dbReference type="GO" id="GO:0014069">
    <property type="term" value="C:postsynaptic density"/>
    <property type="evidence" value="ECO:0000266"/>
    <property type="project" value="RGD"/>
</dbReference>
<dbReference type="GO" id="GO:0032426">
    <property type="term" value="C:stereocilium tip"/>
    <property type="evidence" value="ECO:0000250"/>
    <property type="project" value="UniProtKB"/>
</dbReference>
<dbReference type="GO" id="GO:0003779">
    <property type="term" value="F:actin binding"/>
    <property type="evidence" value="ECO:0000266"/>
    <property type="project" value="RGD"/>
</dbReference>
<dbReference type="GO" id="GO:0035256">
    <property type="term" value="F:G protein-coupled glutamate receptor binding"/>
    <property type="evidence" value="ECO:0000353"/>
    <property type="project" value="UniProtKB"/>
</dbReference>
<dbReference type="GO" id="GO:0035254">
    <property type="term" value="F:glutamate receptor binding"/>
    <property type="evidence" value="ECO:0000353"/>
    <property type="project" value="RGD"/>
</dbReference>
<dbReference type="GO" id="GO:0042802">
    <property type="term" value="F:identical protein binding"/>
    <property type="evidence" value="ECO:0000353"/>
    <property type="project" value="RGD"/>
</dbReference>
<dbReference type="GO" id="GO:0019904">
    <property type="term" value="F:protein domain specific binding"/>
    <property type="evidence" value="ECO:0000315"/>
    <property type="project" value="RGD"/>
</dbReference>
<dbReference type="GO" id="GO:0044877">
    <property type="term" value="F:protein-containing complex binding"/>
    <property type="evidence" value="ECO:0000353"/>
    <property type="project" value="RGD"/>
</dbReference>
<dbReference type="GO" id="GO:0030160">
    <property type="term" value="F:synaptic receptor adaptor activity"/>
    <property type="evidence" value="ECO:0000266"/>
    <property type="project" value="RGD"/>
</dbReference>
<dbReference type="GO" id="GO:0048148">
    <property type="term" value="P:behavioral response to cocaine"/>
    <property type="evidence" value="ECO:0000266"/>
    <property type="project" value="RGD"/>
</dbReference>
<dbReference type="GO" id="GO:0019722">
    <property type="term" value="P:calcium-mediated signaling"/>
    <property type="evidence" value="ECO:0000266"/>
    <property type="project" value="RGD"/>
</dbReference>
<dbReference type="GO" id="GO:0007216">
    <property type="term" value="P:G protein-coupled glutamate receptor signaling pathway"/>
    <property type="evidence" value="ECO:0000318"/>
    <property type="project" value="GO_Central"/>
</dbReference>
<dbReference type="GO" id="GO:0070885">
    <property type="term" value="P:negative regulation of calcineurin-NFAT signaling cascade"/>
    <property type="evidence" value="ECO:0000250"/>
    <property type="project" value="UniProtKB"/>
</dbReference>
<dbReference type="GO" id="GO:0032703">
    <property type="term" value="P:negative regulation of interleukin-2 production"/>
    <property type="evidence" value="ECO:0000250"/>
    <property type="project" value="UniProtKB"/>
</dbReference>
<dbReference type="GO" id="GO:0008277">
    <property type="term" value="P:regulation of G protein-coupled receptor signaling pathway"/>
    <property type="evidence" value="ECO:0000266"/>
    <property type="project" value="RGD"/>
</dbReference>
<dbReference type="GO" id="GO:2001256">
    <property type="term" value="P:regulation of store-operated calcium entry"/>
    <property type="evidence" value="ECO:0000318"/>
    <property type="project" value="GO_Central"/>
</dbReference>
<dbReference type="GO" id="GO:0007605">
    <property type="term" value="P:sensory perception of sound"/>
    <property type="evidence" value="ECO:0000250"/>
    <property type="project" value="UniProtKB"/>
</dbReference>
<dbReference type="CDD" id="cd01206">
    <property type="entry name" value="EVH1_Homer_Vesl"/>
    <property type="match status" value="1"/>
</dbReference>
<dbReference type="FunFam" id="2.30.29.30:FF:000014">
    <property type="entry name" value="Homer homolog 1 (Drosophila)"/>
    <property type="match status" value="1"/>
</dbReference>
<dbReference type="FunFam" id="1.20.5.1700:FF:000004">
    <property type="entry name" value="Homer homolog 2 (Drosophila)"/>
    <property type="match status" value="1"/>
</dbReference>
<dbReference type="Gene3D" id="1.20.5.1700">
    <property type="match status" value="1"/>
</dbReference>
<dbReference type="Gene3D" id="2.30.29.30">
    <property type="entry name" value="Pleckstrin-homology domain (PH domain)/Phosphotyrosine-binding domain (PTB)"/>
    <property type="match status" value="1"/>
</dbReference>
<dbReference type="InterPro" id="IPR045027">
    <property type="entry name" value="Homer"/>
</dbReference>
<dbReference type="InterPro" id="IPR044100">
    <property type="entry name" value="Homer_EVH1"/>
</dbReference>
<dbReference type="InterPro" id="IPR011993">
    <property type="entry name" value="PH-like_dom_sf"/>
</dbReference>
<dbReference type="InterPro" id="IPR000697">
    <property type="entry name" value="WH1/EVH1_dom"/>
</dbReference>
<dbReference type="PANTHER" id="PTHR10918">
    <property type="entry name" value="HOMER"/>
    <property type="match status" value="1"/>
</dbReference>
<dbReference type="Pfam" id="PF00568">
    <property type="entry name" value="WH1"/>
    <property type="match status" value="1"/>
</dbReference>
<dbReference type="SMART" id="SM00461">
    <property type="entry name" value="WH1"/>
    <property type="match status" value="1"/>
</dbReference>
<dbReference type="SUPFAM" id="SSF50729">
    <property type="entry name" value="PH domain-like"/>
    <property type="match status" value="1"/>
</dbReference>
<dbReference type="PROSITE" id="PS50229">
    <property type="entry name" value="WH1"/>
    <property type="match status" value="1"/>
</dbReference>
<protein>
    <recommendedName>
        <fullName evidence="8">Homer protein homolog 2</fullName>
        <shortName>Homer-2</shortName>
    </recommendedName>
    <alternativeName>
        <fullName evidence="2">Cupidin</fullName>
    </alternativeName>
    <alternativeName>
        <fullName>VASP/Ena-related gene up-regulated during seizure and LTP 2</fullName>
        <shortName>Vesl-2</shortName>
    </alternativeName>
</protein>
<proteinExistence type="evidence at protein level"/>
<keyword id="KW-0025">Alternative splicing</keyword>
<keyword id="KW-1003">Cell membrane</keyword>
<keyword id="KW-0966">Cell projection</keyword>
<keyword id="KW-0175">Coiled coil</keyword>
<keyword id="KW-0963">Cytoplasm</keyword>
<keyword id="KW-1009">Hearing</keyword>
<keyword id="KW-0472">Membrane</keyword>
<keyword id="KW-1185">Reference proteome</keyword>
<keyword id="KW-0770">Synapse</keyword>
<evidence type="ECO:0000250" key="1">
    <source>
        <dbReference type="UniProtKB" id="Q9NSB8"/>
    </source>
</evidence>
<evidence type="ECO:0000250" key="2">
    <source>
        <dbReference type="UniProtKB" id="Q9QWW1"/>
    </source>
</evidence>
<evidence type="ECO:0000255" key="3"/>
<evidence type="ECO:0000255" key="4">
    <source>
        <dbReference type="PROSITE-ProRule" id="PRU00410"/>
    </source>
</evidence>
<evidence type="ECO:0000256" key="5">
    <source>
        <dbReference type="SAM" id="MobiDB-lite"/>
    </source>
</evidence>
<evidence type="ECO:0000269" key="6">
    <source>
    </source>
</evidence>
<evidence type="ECO:0000303" key="7">
    <source>
    </source>
</evidence>
<evidence type="ECO:0000305" key="8"/>
<evidence type="ECO:0000305" key="9">
    <source>
    </source>
</evidence>
<evidence type="ECO:0000312" key="10">
    <source>
        <dbReference type="RGD" id="620705"/>
    </source>
</evidence>
<organism>
    <name type="scientific">Rattus norvegicus</name>
    <name type="common">Rat</name>
    <dbReference type="NCBI Taxonomy" id="10116"/>
    <lineage>
        <taxon>Eukaryota</taxon>
        <taxon>Metazoa</taxon>
        <taxon>Chordata</taxon>
        <taxon>Craniata</taxon>
        <taxon>Vertebrata</taxon>
        <taxon>Euteleostomi</taxon>
        <taxon>Mammalia</taxon>
        <taxon>Eutheria</taxon>
        <taxon>Euarchontoglires</taxon>
        <taxon>Glires</taxon>
        <taxon>Rodentia</taxon>
        <taxon>Myomorpha</taxon>
        <taxon>Muroidea</taxon>
        <taxon>Muridae</taxon>
        <taxon>Murinae</taxon>
        <taxon>Rattus</taxon>
    </lineage>
</organism>
<reference key="1">
    <citation type="journal article" date="1998" name="J. Biol. Chem.">
        <title>Novel members of the Vesl/Homer family of PDZ-proteins that bind metabotropic glutamate receptors.</title>
        <authorList>
            <person name="Kato A."/>
            <person name="Ozawa F."/>
            <person name="Saitoh Y."/>
            <person name="Fukazawa Y."/>
            <person name="Sugiyama H."/>
            <person name="Inokuchi K."/>
        </authorList>
    </citation>
    <scope>NUCLEOTIDE SEQUENCE [MRNA] (ISOFORMS 1 AND 2)</scope>
    <source>
        <strain>Sprague-Dawley</strain>
        <tissue>Hippocampus</tissue>
    </source>
</reference>
<reference key="2">
    <citation type="journal article" date="2003" name="Nat. Neurosci.">
        <title>PI3 kinase enhancer-Homer complex couples mGluRI to PI3 kinase, preventing neuronal apoptosis.</title>
        <authorList>
            <person name="Rong R."/>
            <person name="Ahn J.-Y."/>
            <person name="Huang H."/>
            <person name="Nagata E."/>
            <person name="Kalman D."/>
            <person name="Kapp J.A."/>
            <person name="Tu J."/>
            <person name="Worley P.F."/>
            <person name="Snyder S.H."/>
            <person name="Ye K."/>
        </authorList>
    </citation>
    <scope>INTERACTION WITH AGAP2</scope>
</reference>
<reference key="3">
    <citation type="journal article" date="2007" name="Mol. Pharmacol.">
        <title>A key role for diacylglycerol lipase-alpha in metabotropic glutamate receptor-dependent endocannabinoid mobilization.</title>
        <authorList>
            <person name="Jung K.M."/>
            <person name="Astarita G."/>
            <person name="Zhu C."/>
            <person name="Wallace M."/>
            <person name="Mackie K."/>
            <person name="Piomelli D."/>
        </authorList>
    </citation>
    <scope>INTERACTION WITH DAGLA</scope>
    <scope>SUBCELLULAR LOCATION</scope>
</reference>
<sequence>MGEQPIFTTRAHVFQIDPSTKKNWVPASKQAVTVSYFYDVTRNSYRIISVDGAKVIINSTITPNMTFTKTSQKFGQWADSRANTVFGLGFSSEQQLTKFAEKFQEVREAARLARDKSQEKIETSSNHSQESGCETPSSTQASSVNGTDDEKASHASPADTHLKSENDKLKIALTQSAANVKKWEIELQTLRESNARLTTALQESAASVEQWKRQFSICRDENDRLRSKIEELEEQCGEINREKEKNTQLKRRIEELESEVREKEMELKDLRKQSEIIPQLMSECEYVSEKLEAAERDNQNLEDKVRSLKTDIEESKYRQRHLKGELKSFLEVLDGKIDDLHDFRRGLSKLGTDN</sequence>
<accession>O88801</accession>
<accession>O88802</accession>
<gene>
    <name evidence="10" type="primary">Homer2</name>
    <name type="synonym">Vesl2</name>
</gene>
<comment type="function">
    <text evidence="1">Postsynaptic density scaffolding protein. Binds and cross-links cytoplasmic regions of GRM1, GRM5, ITPR1, DNM3, RYR1, RYR2, SHANK1 and SHANK3. By physically linking GRM1 and GRM5 with ER-associated ITPR1 receptors, it aids the coupling of surface receptors to intracellular calcium release. May also couple GRM1 to PI3 kinase through its interaction with AGAP2. Isoforms can be differently regulated and may play an important role in maintaining the plasticity at glutamatergic synapses. Required for normal hearing (By similarity). Negatively regulates T cell activation by inhibiting the calcineurin-NFAT pathway. Acts by competing with calcineurin/PPP3CA for NFAT protein binding, hence preventing NFAT activation by PPP3CA (By similarity).</text>
</comment>
<comment type="subunit">
    <text evidence="1 9">Isoform 1 and isoform 2 encode coiled-coil structures that mediate homo- and heteromultimerization. Interacts with NFATC2; interaction is reduced by AKT activation. Interacts with NFATC1 and NFATC4 (By similarity). Interacts with DAGLA (via PPXXF motif); this interaction is required for the cell membrane localization of DAGLA (Probable).</text>
</comment>
<comment type="subcellular location">
    <subcellularLocation>
        <location evidence="6">Cytoplasm</location>
    </subcellularLocation>
    <subcellularLocation>
        <location evidence="6">Cell membrane</location>
    </subcellularLocation>
    <subcellularLocation>
        <location>Postsynaptic density</location>
    </subcellularLocation>
    <subcellularLocation>
        <location>Synapse</location>
    </subcellularLocation>
    <subcellularLocation>
        <location evidence="2">Cell projection</location>
        <location evidence="2">Stereocilium</location>
    </subcellularLocation>
    <text>Postsynaptic density of neuronal cells. The stabilization and clustering of the metabotropic glutamate receptors appears to be mediated by isoform 1 and isoform 2 at the cell surface.</text>
</comment>
<comment type="alternative products">
    <event type="alternative splicing"/>
    <isoform>
        <id>O88801-1</id>
        <name>1</name>
        <sequence type="displayed"/>
    </isoform>
    <isoform>
        <id>O88801-2</id>
        <name>2</name>
        <name>Vesl-2(delta 11)</name>
        <sequence type="described" ref="VSP_009072"/>
    </isoform>
</comment>
<comment type="tissue specificity">
    <text>Constitutively expressed in the adult hippocampus.</text>
</comment>
<comment type="developmental stage">
    <text>In the developing hippocampus, expression is high at P8, then decreased along with hippocampal development.</text>
</comment>
<comment type="domain">
    <text>The WH1 domain interacts with the PPXXF motif in GRM1, GRM5, RYR1, RYR2, ITPR1, SHANK 1 and SHANK3.</text>
</comment>
<comment type="similarity">
    <text evidence="8">Belongs to the Homer family.</text>
</comment>